<dbReference type="EMBL" id="CP000034">
    <property type="protein sequence ID" value="ABB63868.1"/>
    <property type="molecule type" value="Genomic_DNA"/>
</dbReference>
<dbReference type="RefSeq" id="WP_000130686.1">
    <property type="nucleotide sequence ID" value="NC_007606.1"/>
</dbReference>
<dbReference type="RefSeq" id="YP_405359.1">
    <property type="nucleotide sequence ID" value="NC_007606.1"/>
</dbReference>
<dbReference type="SMR" id="Q329Y7"/>
<dbReference type="STRING" id="300267.SDY_3934"/>
<dbReference type="EnsemblBacteria" id="ABB63868">
    <property type="protein sequence ID" value="ABB63868"/>
    <property type="gene ID" value="SDY_3934"/>
</dbReference>
<dbReference type="GeneID" id="75174046"/>
<dbReference type="KEGG" id="sdy:SDY_3934"/>
<dbReference type="PATRIC" id="fig|300267.13.peg.4645"/>
<dbReference type="HOGENOM" id="CLU_027562_9_0_6"/>
<dbReference type="Proteomes" id="UP000002716">
    <property type="component" value="Chromosome"/>
</dbReference>
<dbReference type="GO" id="GO:0005737">
    <property type="term" value="C:cytoplasm"/>
    <property type="evidence" value="ECO:0007669"/>
    <property type="project" value="UniProtKB-SubCell"/>
</dbReference>
<dbReference type="GO" id="GO:0003677">
    <property type="term" value="F:DNA binding"/>
    <property type="evidence" value="ECO:0007669"/>
    <property type="project" value="UniProtKB-KW"/>
</dbReference>
<dbReference type="GO" id="GO:0009037">
    <property type="term" value="F:tyrosine-based site-specific recombinase activity"/>
    <property type="evidence" value="ECO:0007669"/>
    <property type="project" value="UniProtKB-UniRule"/>
</dbReference>
<dbReference type="GO" id="GO:0051301">
    <property type="term" value="P:cell division"/>
    <property type="evidence" value="ECO:0007669"/>
    <property type="project" value="UniProtKB-KW"/>
</dbReference>
<dbReference type="GO" id="GO:0007059">
    <property type="term" value="P:chromosome segregation"/>
    <property type="evidence" value="ECO:0007669"/>
    <property type="project" value="UniProtKB-UniRule"/>
</dbReference>
<dbReference type="GO" id="GO:0006313">
    <property type="term" value="P:DNA transposition"/>
    <property type="evidence" value="ECO:0007669"/>
    <property type="project" value="UniProtKB-UniRule"/>
</dbReference>
<dbReference type="CDD" id="cd00798">
    <property type="entry name" value="INT_XerDC_C"/>
    <property type="match status" value="1"/>
</dbReference>
<dbReference type="FunFam" id="1.10.443.10:FF:000002">
    <property type="entry name" value="Tyrosine recombinase XerC"/>
    <property type="match status" value="1"/>
</dbReference>
<dbReference type="Gene3D" id="1.10.150.130">
    <property type="match status" value="1"/>
</dbReference>
<dbReference type="Gene3D" id="1.10.443.10">
    <property type="entry name" value="Intergrase catalytic core"/>
    <property type="match status" value="1"/>
</dbReference>
<dbReference type="HAMAP" id="MF_01808">
    <property type="entry name" value="Recomb_XerC_XerD"/>
    <property type="match status" value="1"/>
</dbReference>
<dbReference type="InterPro" id="IPR044068">
    <property type="entry name" value="CB"/>
</dbReference>
<dbReference type="InterPro" id="IPR011010">
    <property type="entry name" value="DNA_brk_join_enz"/>
</dbReference>
<dbReference type="InterPro" id="IPR013762">
    <property type="entry name" value="Integrase-like_cat_sf"/>
</dbReference>
<dbReference type="InterPro" id="IPR002104">
    <property type="entry name" value="Integrase_catalytic"/>
</dbReference>
<dbReference type="InterPro" id="IPR010998">
    <property type="entry name" value="Integrase_recombinase_N"/>
</dbReference>
<dbReference type="InterPro" id="IPR004107">
    <property type="entry name" value="Integrase_SAM-like_N"/>
</dbReference>
<dbReference type="InterPro" id="IPR011931">
    <property type="entry name" value="Recomb_XerC"/>
</dbReference>
<dbReference type="InterPro" id="IPR023009">
    <property type="entry name" value="Tyrosine_recombinase_XerC/XerD"/>
</dbReference>
<dbReference type="InterPro" id="IPR050090">
    <property type="entry name" value="Tyrosine_recombinase_XerCD"/>
</dbReference>
<dbReference type="NCBIfam" id="NF001399">
    <property type="entry name" value="PRK00283.1"/>
    <property type="match status" value="1"/>
</dbReference>
<dbReference type="NCBIfam" id="TIGR02224">
    <property type="entry name" value="recomb_XerC"/>
    <property type="match status" value="1"/>
</dbReference>
<dbReference type="PANTHER" id="PTHR30349">
    <property type="entry name" value="PHAGE INTEGRASE-RELATED"/>
    <property type="match status" value="1"/>
</dbReference>
<dbReference type="PANTHER" id="PTHR30349:SF81">
    <property type="entry name" value="TYROSINE RECOMBINASE XERC"/>
    <property type="match status" value="1"/>
</dbReference>
<dbReference type="Pfam" id="PF02899">
    <property type="entry name" value="Phage_int_SAM_1"/>
    <property type="match status" value="1"/>
</dbReference>
<dbReference type="Pfam" id="PF00589">
    <property type="entry name" value="Phage_integrase"/>
    <property type="match status" value="1"/>
</dbReference>
<dbReference type="SUPFAM" id="SSF56349">
    <property type="entry name" value="DNA breaking-rejoining enzymes"/>
    <property type="match status" value="1"/>
</dbReference>
<dbReference type="SUPFAM" id="SSF47823">
    <property type="entry name" value="lambda integrase-like, N-terminal domain"/>
    <property type="match status" value="1"/>
</dbReference>
<dbReference type="PROSITE" id="PS51900">
    <property type="entry name" value="CB"/>
    <property type="match status" value="1"/>
</dbReference>
<dbReference type="PROSITE" id="PS51898">
    <property type="entry name" value="TYR_RECOMBINASE"/>
    <property type="match status" value="1"/>
</dbReference>
<evidence type="ECO:0000255" key="1">
    <source>
        <dbReference type="HAMAP-Rule" id="MF_01808"/>
    </source>
</evidence>
<evidence type="ECO:0000255" key="2">
    <source>
        <dbReference type="PROSITE-ProRule" id="PRU01246"/>
    </source>
</evidence>
<evidence type="ECO:0000255" key="3">
    <source>
        <dbReference type="PROSITE-ProRule" id="PRU01248"/>
    </source>
</evidence>
<feature type="chain" id="PRO_1000070040" description="Tyrosine recombinase XerC">
    <location>
        <begin position="1"/>
        <end position="298"/>
    </location>
</feature>
<feature type="domain" description="Core-binding (CB)" evidence="3">
    <location>
        <begin position="2"/>
        <end position="88"/>
    </location>
</feature>
<feature type="domain" description="Tyr recombinase" evidence="2">
    <location>
        <begin position="109"/>
        <end position="288"/>
    </location>
</feature>
<feature type="active site" evidence="1">
    <location>
        <position position="148"/>
    </location>
</feature>
<feature type="active site" evidence="1">
    <location>
        <position position="172"/>
    </location>
</feature>
<feature type="active site" evidence="1">
    <location>
        <position position="240"/>
    </location>
</feature>
<feature type="active site" evidence="1">
    <location>
        <position position="243"/>
    </location>
</feature>
<feature type="active site" evidence="1">
    <location>
        <position position="266"/>
    </location>
</feature>
<feature type="active site" description="O-(3'-phospho-DNA)-tyrosine intermediate" evidence="1">
    <location>
        <position position="275"/>
    </location>
</feature>
<name>XERC_SHIDS</name>
<accession>Q329Y7</accession>
<keyword id="KW-0131">Cell cycle</keyword>
<keyword id="KW-0132">Cell division</keyword>
<keyword id="KW-0159">Chromosome partition</keyword>
<keyword id="KW-0963">Cytoplasm</keyword>
<keyword id="KW-0229">DNA integration</keyword>
<keyword id="KW-0233">DNA recombination</keyword>
<keyword id="KW-0238">DNA-binding</keyword>
<keyword id="KW-1185">Reference proteome</keyword>
<protein>
    <recommendedName>
        <fullName evidence="1">Tyrosine recombinase XerC</fullName>
    </recommendedName>
</protein>
<comment type="function">
    <text evidence="1">Site-specific tyrosine recombinase, which acts by catalyzing the cutting and rejoining of the recombining DNA molecules. Binds cooperatively to specific DNA consensus sequences that are separated from XerD binding sites by a short central region, forming the heterotetrameric XerC-XerD complex that recombines DNA substrates. The complex is essential to convert dimers of the bacterial chromosome into monomers to permit their segregation at cell division. It also contributes to the segregational stability of plasmids. In the complex XerC specifically exchanges the top DNA strands.</text>
</comment>
<comment type="activity regulation">
    <text evidence="1">FtsK may regulate the catalytic switch between XerC and XerD in the heterotetrameric complex during the two steps of the recombination process.</text>
</comment>
<comment type="subunit">
    <text evidence="1">Forms a cyclic heterotetrameric complex composed of two molecules of XerC and two molecules of XerD, in which XerC interacts with XerD via its C-terminal region, XerD interacts with XerC via its C-terminal region and so on.</text>
</comment>
<comment type="subcellular location">
    <subcellularLocation>
        <location evidence="1">Cytoplasm</location>
    </subcellularLocation>
</comment>
<comment type="similarity">
    <text evidence="1">Belongs to the 'phage' integrase family. XerC subfamily.</text>
</comment>
<gene>
    <name evidence="1" type="primary">xerC</name>
    <name type="ordered locus">SDY_3934</name>
</gene>
<proteinExistence type="inferred from homology"/>
<reference key="1">
    <citation type="journal article" date="2005" name="Nucleic Acids Res.">
        <title>Genome dynamics and diversity of Shigella species, the etiologic agents of bacillary dysentery.</title>
        <authorList>
            <person name="Yang F."/>
            <person name="Yang J."/>
            <person name="Zhang X."/>
            <person name="Chen L."/>
            <person name="Jiang Y."/>
            <person name="Yan Y."/>
            <person name="Tang X."/>
            <person name="Wang J."/>
            <person name="Xiong Z."/>
            <person name="Dong J."/>
            <person name="Xue Y."/>
            <person name="Zhu Y."/>
            <person name="Xu X."/>
            <person name="Sun L."/>
            <person name="Chen S."/>
            <person name="Nie H."/>
            <person name="Peng J."/>
            <person name="Xu J."/>
            <person name="Wang Y."/>
            <person name="Yuan Z."/>
            <person name="Wen Y."/>
            <person name="Yao Z."/>
            <person name="Shen Y."/>
            <person name="Qiang B."/>
            <person name="Hou Y."/>
            <person name="Yu J."/>
            <person name="Jin Q."/>
        </authorList>
    </citation>
    <scope>NUCLEOTIDE SEQUENCE [LARGE SCALE GENOMIC DNA]</scope>
    <source>
        <strain>Sd197</strain>
    </source>
</reference>
<sequence>MTDLHTDVERYLRYLSVERQLSPITLLNYQRQLEAIINFASENGLQSWQQCDAAMVRNFAVRSRRKGLGAASLALRLSALRSFFDWLVSQNELKANPAKGVSAPKAPRHLPKNIDVDDMNRLLDIDINDPLAVRDRAMLEVMYGAGLRLSELVGLDIKHLDLESGEVWVMGKGSKERRLPIGRNAVAWIEHWLDLRDLFGSEDDALFLSKLGKRISARNVQKRFAEWGIKQGLNNHVHPHKLRHSFATHMLESSGDLRGVQELLGHANLSTTQIYTHLDFQHLASVYDAAHPRAKRGK</sequence>
<organism>
    <name type="scientific">Shigella dysenteriae serotype 1 (strain Sd197)</name>
    <dbReference type="NCBI Taxonomy" id="300267"/>
    <lineage>
        <taxon>Bacteria</taxon>
        <taxon>Pseudomonadati</taxon>
        <taxon>Pseudomonadota</taxon>
        <taxon>Gammaproteobacteria</taxon>
        <taxon>Enterobacterales</taxon>
        <taxon>Enterobacteriaceae</taxon>
        <taxon>Shigella</taxon>
    </lineage>
</organism>